<reference key="1">
    <citation type="submission" date="2007-11" db="EMBL/GenBank/DDBJ databases">
        <authorList>
            <consortium name="The Salmonella enterica serovar Paratyphi B Genome Sequencing Project"/>
            <person name="McClelland M."/>
            <person name="Sanderson E.K."/>
            <person name="Porwollik S."/>
            <person name="Spieth J."/>
            <person name="Clifton W.S."/>
            <person name="Fulton R."/>
            <person name="Cordes M."/>
            <person name="Wollam A."/>
            <person name="Shah N."/>
            <person name="Pepin K."/>
            <person name="Bhonagiri V."/>
            <person name="Nash W."/>
            <person name="Johnson M."/>
            <person name="Thiruvilangam P."/>
            <person name="Wilson R."/>
        </authorList>
    </citation>
    <scope>NUCLEOTIDE SEQUENCE [LARGE SCALE GENOMIC DNA]</scope>
    <source>
        <strain>ATCC BAA-1250 / SPB7</strain>
    </source>
</reference>
<feature type="chain" id="PRO_1000087796" description="Cytidine deaminase">
    <location>
        <begin position="1"/>
        <end position="294"/>
    </location>
</feature>
<feature type="domain" description="CMP/dCMP-type deaminase 1" evidence="2">
    <location>
        <begin position="48"/>
        <end position="168"/>
    </location>
</feature>
<feature type="domain" description="CMP/dCMP-type deaminase 2" evidence="2">
    <location>
        <begin position="186"/>
        <end position="294"/>
    </location>
</feature>
<feature type="active site" description="Proton donor" evidence="1">
    <location>
        <position position="104"/>
    </location>
</feature>
<feature type="binding site" evidence="1">
    <location>
        <begin position="89"/>
        <end position="91"/>
    </location>
    <ligand>
        <name>substrate</name>
    </ligand>
</feature>
<feature type="binding site" evidence="1">
    <location>
        <position position="102"/>
    </location>
    <ligand>
        <name>Zn(2+)</name>
        <dbReference type="ChEBI" id="CHEBI:29105"/>
        <note>catalytic</note>
    </ligand>
</feature>
<feature type="binding site" evidence="1">
    <location>
        <position position="129"/>
    </location>
    <ligand>
        <name>Zn(2+)</name>
        <dbReference type="ChEBI" id="CHEBI:29105"/>
        <note>catalytic</note>
    </ligand>
</feature>
<feature type="binding site" evidence="1">
    <location>
        <position position="132"/>
    </location>
    <ligand>
        <name>Zn(2+)</name>
        <dbReference type="ChEBI" id="CHEBI:29105"/>
        <note>catalytic</note>
    </ligand>
</feature>
<name>CDD_SALPB</name>
<proteinExistence type="inferred from homology"/>
<accession>A9N6L3</accession>
<keyword id="KW-0378">Hydrolase</keyword>
<keyword id="KW-0479">Metal-binding</keyword>
<keyword id="KW-0862">Zinc</keyword>
<gene>
    <name evidence="1" type="primary">cdd</name>
    <name type="ordered locus">SPAB_00833</name>
</gene>
<comment type="function">
    <text evidence="1">This enzyme scavenges exogenous and endogenous cytidine and 2'-deoxycytidine for UMP synthesis.</text>
</comment>
<comment type="catalytic activity">
    <reaction evidence="1">
        <text>cytidine + H2O + H(+) = uridine + NH4(+)</text>
        <dbReference type="Rhea" id="RHEA:16069"/>
        <dbReference type="ChEBI" id="CHEBI:15377"/>
        <dbReference type="ChEBI" id="CHEBI:15378"/>
        <dbReference type="ChEBI" id="CHEBI:16704"/>
        <dbReference type="ChEBI" id="CHEBI:17562"/>
        <dbReference type="ChEBI" id="CHEBI:28938"/>
        <dbReference type="EC" id="3.5.4.5"/>
    </reaction>
</comment>
<comment type="catalytic activity">
    <reaction evidence="1">
        <text>2'-deoxycytidine + H2O + H(+) = 2'-deoxyuridine + NH4(+)</text>
        <dbReference type="Rhea" id="RHEA:13433"/>
        <dbReference type="ChEBI" id="CHEBI:15377"/>
        <dbReference type="ChEBI" id="CHEBI:15378"/>
        <dbReference type="ChEBI" id="CHEBI:15698"/>
        <dbReference type="ChEBI" id="CHEBI:16450"/>
        <dbReference type="ChEBI" id="CHEBI:28938"/>
        <dbReference type="EC" id="3.5.4.5"/>
    </reaction>
</comment>
<comment type="cofactor">
    <cofactor evidence="1">
        <name>Zn(2+)</name>
        <dbReference type="ChEBI" id="CHEBI:29105"/>
    </cofactor>
    <text evidence="1">Binds 1 zinc ion.</text>
</comment>
<comment type="subunit">
    <text evidence="1">Homodimer.</text>
</comment>
<comment type="similarity">
    <text evidence="1">Belongs to the cytidine and deoxycytidylate deaminase family.</text>
</comment>
<evidence type="ECO:0000255" key="1">
    <source>
        <dbReference type="HAMAP-Rule" id="MF_01558"/>
    </source>
</evidence>
<evidence type="ECO:0000255" key="2">
    <source>
        <dbReference type="PROSITE-ProRule" id="PRU01083"/>
    </source>
</evidence>
<protein>
    <recommendedName>
        <fullName evidence="1">Cytidine deaminase</fullName>
        <ecNumber evidence="1">3.5.4.5</ecNumber>
    </recommendedName>
    <alternativeName>
        <fullName evidence="1">Cytidine aminohydrolase</fullName>
        <shortName evidence="1">CDA</shortName>
    </alternativeName>
</protein>
<organism>
    <name type="scientific">Salmonella paratyphi B (strain ATCC BAA-1250 / SPB7)</name>
    <dbReference type="NCBI Taxonomy" id="1016998"/>
    <lineage>
        <taxon>Bacteria</taxon>
        <taxon>Pseudomonadati</taxon>
        <taxon>Pseudomonadota</taxon>
        <taxon>Gammaproteobacteria</taxon>
        <taxon>Enterobacterales</taxon>
        <taxon>Enterobacteriaceae</taxon>
        <taxon>Salmonella</taxon>
    </lineage>
</organism>
<sequence length="294" mass="31619">MHPRFQTAFAQLADNLQSALAPILADHHFPAMLTAEQVSTLKNTAGLDEDALAFALLPLAAACARTDLSHFNVGAIARGVSGNWYFGANMEFLGATMQQTVHAEQSAISHAWLRGEKGLAAVTVNYTPCGHCRQFMNELNSGLDLRIHLPGRAPHTLRDYLPDAFGPKDLEIKTLLMDEQDHGFTLTGDTLTQAAITAANKSHMPYSHSPSGVALECKDGRIFTGSYAENAAFNPTLPPLQGALNLLSLNGYDYADIQRAILAEKGDAALIQWDATAATLKALGCHNIDRVLLG</sequence>
<dbReference type="EC" id="3.5.4.5" evidence="1"/>
<dbReference type="EMBL" id="CP000886">
    <property type="protein sequence ID" value="ABX66257.1"/>
    <property type="molecule type" value="Genomic_DNA"/>
</dbReference>
<dbReference type="RefSeq" id="WP_000553526.1">
    <property type="nucleotide sequence ID" value="NC_010102.1"/>
</dbReference>
<dbReference type="SMR" id="A9N6L3"/>
<dbReference type="KEGG" id="spq:SPAB_00833"/>
<dbReference type="PATRIC" id="fig|1016998.12.peg.780"/>
<dbReference type="HOGENOM" id="CLU_052424_0_0_6"/>
<dbReference type="BioCyc" id="SENT1016998:SPAB_RS03430-MONOMER"/>
<dbReference type="Proteomes" id="UP000008556">
    <property type="component" value="Chromosome"/>
</dbReference>
<dbReference type="GO" id="GO:0005829">
    <property type="term" value="C:cytosol"/>
    <property type="evidence" value="ECO:0007669"/>
    <property type="project" value="TreeGrafter"/>
</dbReference>
<dbReference type="GO" id="GO:0004126">
    <property type="term" value="F:cytidine deaminase activity"/>
    <property type="evidence" value="ECO:0007669"/>
    <property type="project" value="UniProtKB-UniRule"/>
</dbReference>
<dbReference type="GO" id="GO:0042802">
    <property type="term" value="F:identical protein binding"/>
    <property type="evidence" value="ECO:0007669"/>
    <property type="project" value="UniProtKB-ARBA"/>
</dbReference>
<dbReference type="GO" id="GO:0008270">
    <property type="term" value="F:zinc ion binding"/>
    <property type="evidence" value="ECO:0007669"/>
    <property type="project" value="UniProtKB-UniRule"/>
</dbReference>
<dbReference type="GO" id="GO:0009972">
    <property type="term" value="P:cytidine deamination"/>
    <property type="evidence" value="ECO:0007669"/>
    <property type="project" value="InterPro"/>
</dbReference>
<dbReference type="CDD" id="cd01283">
    <property type="entry name" value="cytidine_deaminase"/>
    <property type="match status" value="2"/>
</dbReference>
<dbReference type="FunFam" id="3.40.140.10:FF:000006">
    <property type="entry name" value="Cytidine deaminase"/>
    <property type="match status" value="1"/>
</dbReference>
<dbReference type="FunFam" id="3.40.140.10:FF:000007">
    <property type="entry name" value="Cytidine deaminase"/>
    <property type="match status" value="1"/>
</dbReference>
<dbReference type="Gene3D" id="3.40.140.10">
    <property type="entry name" value="Cytidine Deaminase, domain 2"/>
    <property type="match status" value="2"/>
</dbReference>
<dbReference type="HAMAP" id="MF_01558">
    <property type="entry name" value="Cyt_deam"/>
    <property type="match status" value="1"/>
</dbReference>
<dbReference type="InterPro" id="IPR016192">
    <property type="entry name" value="APOBEC/CMP_deaminase_Zn-bd"/>
</dbReference>
<dbReference type="InterPro" id="IPR002125">
    <property type="entry name" value="CMP_dCMP_dom"/>
</dbReference>
<dbReference type="InterPro" id="IPR013171">
    <property type="entry name" value="Cyd/dCyd_deaminase_Zn-bd"/>
</dbReference>
<dbReference type="InterPro" id="IPR050202">
    <property type="entry name" value="Cyt/Deoxycyt_deaminase"/>
</dbReference>
<dbReference type="InterPro" id="IPR006263">
    <property type="entry name" value="Cyt_deam_dimer"/>
</dbReference>
<dbReference type="InterPro" id="IPR016193">
    <property type="entry name" value="Cytidine_deaminase-like"/>
</dbReference>
<dbReference type="InterPro" id="IPR020797">
    <property type="entry name" value="Cytidine_deaminase_bacteria"/>
</dbReference>
<dbReference type="NCBIfam" id="TIGR01355">
    <property type="entry name" value="cyt_deam_dimer"/>
    <property type="match status" value="1"/>
</dbReference>
<dbReference type="NCBIfam" id="NF006537">
    <property type="entry name" value="PRK09027.1"/>
    <property type="match status" value="1"/>
</dbReference>
<dbReference type="PANTHER" id="PTHR11644">
    <property type="entry name" value="CYTIDINE DEAMINASE"/>
    <property type="match status" value="1"/>
</dbReference>
<dbReference type="PANTHER" id="PTHR11644:SF2">
    <property type="entry name" value="CYTIDINE DEAMINASE"/>
    <property type="match status" value="1"/>
</dbReference>
<dbReference type="Pfam" id="PF00383">
    <property type="entry name" value="dCMP_cyt_deam_1"/>
    <property type="match status" value="1"/>
</dbReference>
<dbReference type="Pfam" id="PF08211">
    <property type="entry name" value="dCMP_cyt_deam_2"/>
    <property type="match status" value="1"/>
</dbReference>
<dbReference type="PIRSF" id="PIRSF006334">
    <property type="entry name" value="Cdd_plus_pseudo"/>
    <property type="match status" value="1"/>
</dbReference>
<dbReference type="SUPFAM" id="SSF53927">
    <property type="entry name" value="Cytidine deaminase-like"/>
    <property type="match status" value="2"/>
</dbReference>
<dbReference type="PROSITE" id="PS00903">
    <property type="entry name" value="CYT_DCMP_DEAMINASES_1"/>
    <property type="match status" value="1"/>
</dbReference>
<dbReference type="PROSITE" id="PS51747">
    <property type="entry name" value="CYT_DCMP_DEAMINASES_2"/>
    <property type="match status" value="2"/>
</dbReference>